<proteinExistence type="inferred from homology"/>
<organism>
    <name type="scientific">Bartonella tribocorum (strain CIP 105476 / IBS 506)</name>
    <dbReference type="NCBI Taxonomy" id="382640"/>
    <lineage>
        <taxon>Bacteria</taxon>
        <taxon>Pseudomonadati</taxon>
        <taxon>Pseudomonadota</taxon>
        <taxon>Alphaproteobacteria</taxon>
        <taxon>Hyphomicrobiales</taxon>
        <taxon>Bartonellaceae</taxon>
        <taxon>Bartonella</taxon>
    </lineage>
</organism>
<sequence>MIQMQTNLDVADNSGARRVMCIKVLGGSKRKYASVGDIIVVSVKDAIPRGRVKKGDVMKAVVVRTAKDIRRADGSVIRFDSNAAVLVDNKKEPIGTRIFGPVPRELRGRNHMKIISLAPEVL</sequence>
<name>RL14_BART1</name>
<accession>A9IW13</accession>
<gene>
    <name evidence="1" type="primary">rplN</name>
    <name type="ordered locus">BT_1508</name>
</gene>
<keyword id="KW-0687">Ribonucleoprotein</keyword>
<keyword id="KW-0689">Ribosomal protein</keyword>
<keyword id="KW-0694">RNA-binding</keyword>
<keyword id="KW-0699">rRNA-binding</keyword>
<comment type="function">
    <text evidence="1">Binds to 23S rRNA. Forms part of two intersubunit bridges in the 70S ribosome.</text>
</comment>
<comment type="subunit">
    <text evidence="1">Part of the 50S ribosomal subunit. Forms a cluster with proteins L3 and L19. In the 70S ribosome, L14 and L19 interact and together make contacts with the 16S rRNA in bridges B5 and B8.</text>
</comment>
<comment type="similarity">
    <text evidence="1">Belongs to the universal ribosomal protein uL14 family.</text>
</comment>
<evidence type="ECO:0000255" key="1">
    <source>
        <dbReference type="HAMAP-Rule" id="MF_01367"/>
    </source>
</evidence>
<evidence type="ECO:0000305" key="2"/>
<feature type="chain" id="PRO_1000087115" description="Large ribosomal subunit protein uL14">
    <location>
        <begin position="1"/>
        <end position="122"/>
    </location>
</feature>
<protein>
    <recommendedName>
        <fullName evidence="1">Large ribosomal subunit protein uL14</fullName>
    </recommendedName>
    <alternativeName>
        <fullName evidence="2">50S ribosomal protein L14</fullName>
    </alternativeName>
</protein>
<reference key="1">
    <citation type="journal article" date="2007" name="Nat. Genet.">
        <title>Genomic analysis of Bartonella identifies type IV secretion systems as host adaptability factors.</title>
        <authorList>
            <person name="Saenz H.L."/>
            <person name="Engel P."/>
            <person name="Stoeckli M.C."/>
            <person name="Lanz C."/>
            <person name="Raddatz G."/>
            <person name="Vayssier-Taussat M."/>
            <person name="Birtles R."/>
            <person name="Schuster S.C."/>
            <person name="Dehio C."/>
        </authorList>
    </citation>
    <scope>NUCLEOTIDE SEQUENCE [LARGE SCALE GENOMIC DNA]</scope>
    <source>
        <strain>CIP 105476 / IBS 506</strain>
    </source>
</reference>
<dbReference type="EMBL" id="AM260525">
    <property type="protein sequence ID" value="CAK01854.1"/>
    <property type="molecule type" value="Genomic_DNA"/>
</dbReference>
<dbReference type="RefSeq" id="WP_004855715.1">
    <property type="nucleotide sequence ID" value="NC_010161.1"/>
</dbReference>
<dbReference type="SMR" id="A9IW13"/>
<dbReference type="GeneID" id="71061549"/>
<dbReference type="KEGG" id="btr:BT_1508"/>
<dbReference type="eggNOG" id="COG0093">
    <property type="taxonomic scope" value="Bacteria"/>
</dbReference>
<dbReference type="HOGENOM" id="CLU_095071_2_1_5"/>
<dbReference type="Proteomes" id="UP000001592">
    <property type="component" value="Chromosome"/>
</dbReference>
<dbReference type="GO" id="GO:0022625">
    <property type="term" value="C:cytosolic large ribosomal subunit"/>
    <property type="evidence" value="ECO:0007669"/>
    <property type="project" value="TreeGrafter"/>
</dbReference>
<dbReference type="GO" id="GO:0070180">
    <property type="term" value="F:large ribosomal subunit rRNA binding"/>
    <property type="evidence" value="ECO:0007669"/>
    <property type="project" value="TreeGrafter"/>
</dbReference>
<dbReference type="GO" id="GO:0003735">
    <property type="term" value="F:structural constituent of ribosome"/>
    <property type="evidence" value="ECO:0007669"/>
    <property type="project" value="InterPro"/>
</dbReference>
<dbReference type="GO" id="GO:0006412">
    <property type="term" value="P:translation"/>
    <property type="evidence" value="ECO:0007669"/>
    <property type="project" value="UniProtKB-UniRule"/>
</dbReference>
<dbReference type="CDD" id="cd00337">
    <property type="entry name" value="Ribosomal_uL14"/>
    <property type="match status" value="1"/>
</dbReference>
<dbReference type="FunFam" id="2.40.150.20:FF:000001">
    <property type="entry name" value="50S ribosomal protein L14"/>
    <property type="match status" value="1"/>
</dbReference>
<dbReference type="Gene3D" id="2.40.150.20">
    <property type="entry name" value="Ribosomal protein L14"/>
    <property type="match status" value="1"/>
</dbReference>
<dbReference type="HAMAP" id="MF_01367">
    <property type="entry name" value="Ribosomal_uL14"/>
    <property type="match status" value="1"/>
</dbReference>
<dbReference type="InterPro" id="IPR000218">
    <property type="entry name" value="Ribosomal_uL14"/>
</dbReference>
<dbReference type="InterPro" id="IPR005745">
    <property type="entry name" value="Ribosomal_uL14_bac-type"/>
</dbReference>
<dbReference type="InterPro" id="IPR019972">
    <property type="entry name" value="Ribosomal_uL14_CS"/>
</dbReference>
<dbReference type="InterPro" id="IPR036853">
    <property type="entry name" value="Ribosomal_uL14_sf"/>
</dbReference>
<dbReference type="NCBIfam" id="TIGR01067">
    <property type="entry name" value="rplN_bact"/>
    <property type="match status" value="1"/>
</dbReference>
<dbReference type="PANTHER" id="PTHR11761">
    <property type="entry name" value="50S/60S RIBOSOMAL PROTEIN L14/L23"/>
    <property type="match status" value="1"/>
</dbReference>
<dbReference type="PANTHER" id="PTHR11761:SF3">
    <property type="entry name" value="LARGE RIBOSOMAL SUBUNIT PROTEIN UL14M"/>
    <property type="match status" value="1"/>
</dbReference>
<dbReference type="Pfam" id="PF00238">
    <property type="entry name" value="Ribosomal_L14"/>
    <property type="match status" value="1"/>
</dbReference>
<dbReference type="SMART" id="SM01374">
    <property type="entry name" value="Ribosomal_L14"/>
    <property type="match status" value="1"/>
</dbReference>
<dbReference type="SUPFAM" id="SSF50193">
    <property type="entry name" value="Ribosomal protein L14"/>
    <property type="match status" value="1"/>
</dbReference>
<dbReference type="PROSITE" id="PS00049">
    <property type="entry name" value="RIBOSOMAL_L14"/>
    <property type="match status" value="1"/>
</dbReference>